<proteinExistence type="inferred from homology"/>
<comment type="subcellular location">
    <subcellularLocation>
        <location evidence="1">Cytoplasm</location>
    </subcellularLocation>
</comment>
<comment type="similarity">
    <text evidence="1">Belongs to the methyltransferase superfamily. TrmY family.</text>
</comment>
<dbReference type="EC" id="2.1.1.-" evidence="1"/>
<dbReference type="EMBL" id="CP000447">
    <property type="protein sequence ID" value="ABI71628.1"/>
    <property type="molecule type" value="Genomic_DNA"/>
</dbReference>
<dbReference type="RefSeq" id="WP_011637244.1">
    <property type="nucleotide sequence ID" value="NC_008345.1"/>
</dbReference>
<dbReference type="SMR" id="Q083D7"/>
<dbReference type="STRING" id="318167.Sfri_1778"/>
<dbReference type="KEGG" id="sfr:Sfri_1778"/>
<dbReference type="eggNOG" id="COG1901">
    <property type="taxonomic scope" value="Bacteria"/>
</dbReference>
<dbReference type="HOGENOM" id="CLU_107018_0_0_6"/>
<dbReference type="OrthoDB" id="6019967at2"/>
<dbReference type="Proteomes" id="UP000000684">
    <property type="component" value="Chromosome"/>
</dbReference>
<dbReference type="GO" id="GO:0005737">
    <property type="term" value="C:cytoplasm"/>
    <property type="evidence" value="ECO:0007669"/>
    <property type="project" value="UniProtKB-SubCell"/>
</dbReference>
<dbReference type="GO" id="GO:0008757">
    <property type="term" value="F:S-adenosylmethionine-dependent methyltransferase activity"/>
    <property type="evidence" value="ECO:0007669"/>
    <property type="project" value="UniProtKB-UniRule"/>
</dbReference>
<dbReference type="GO" id="GO:0008175">
    <property type="term" value="F:tRNA methyltransferase activity"/>
    <property type="evidence" value="ECO:0007669"/>
    <property type="project" value="InterPro"/>
</dbReference>
<dbReference type="GO" id="GO:0030488">
    <property type="term" value="P:tRNA methylation"/>
    <property type="evidence" value="ECO:0007669"/>
    <property type="project" value="TreeGrafter"/>
</dbReference>
<dbReference type="CDD" id="cd18087">
    <property type="entry name" value="TrmY-like"/>
    <property type="match status" value="1"/>
</dbReference>
<dbReference type="Gene3D" id="3.40.1280.10">
    <property type="match status" value="1"/>
</dbReference>
<dbReference type="HAMAP" id="MF_00587">
    <property type="entry name" value="tRNA_methyltr_TrmY"/>
    <property type="match status" value="1"/>
</dbReference>
<dbReference type="InterPro" id="IPR029028">
    <property type="entry name" value="Alpha/beta_knot_MTases"/>
</dbReference>
<dbReference type="InterPro" id="IPR007158">
    <property type="entry name" value="TrmY"/>
</dbReference>
<dbReference type="InterPro" id="IPR029026">
    <property type="entry name" value="tRNA_m1G_MTases_N"/>
</dbReference>
<dbReference type="NCBIfam" id="NF002560">
    <property type="entry name" value="PRK02135.1"/>
    <property type="match status" value="1"/>
</dbReference>
<dbReference type="PANTHER" id="PTHR40703">
    <property type="entry name" value="TRNA (PSEUDOURIDINE(54)-N(1))-METHYLTRANSFERASE"/>
    <property type="match status" value="1"/>
</dbReference>
<dbReference type="PANTHER" id="PTHR40703:SF1">
    <property type="entry name" value="TRNA (PSEUDOURIDINE(54)-N(1))-METHYLTRANSFERASE"/>
    <property type="match status" value="1"/>
</dbReference>
<dbReference type="Pfam" id="PF04013">
    <property type="entry name" value="Methyltrn_RNA_2"/>
    <property type="match status" value="1"/>
</dbReference>
<dbReference type="SUPFAM" id="SSF75217">
    <property type="entry name" value="alpha/beta knot"/>
    <property type="match status" value="1"/>
</dbReference>
<organism>
    <name type="scientific">Shewanella frigidimarina (strain NCIMB 400)</name>
    <dbReference type="NCBI Taxonomy" id="318167"/>
    <lineage>
        <taxon>Bacteria</taxon>
        <taxon>Pseudomonadati</taxon>
        <taxon>Pseudomonadota</taxon>
        <taxon>Gammaproteobacteria</taxon>
        <taxon>Alteromonadales</taxon>
        <taxon>Shewanellaceae</taxon>
        <taxon>Shewanella</taxon>
    </lineage>
</organism>
<protein>
    <recommendedName>
        <fullName evidence="1">Putative pseudouridine methyltransferase</fullName>
        <ecNumber evidence="1">2.1.1.-</ecNumber>
    </recommendedName>
</protein>
<evidence type="ECO:0000255" key="1">
    <source>
        <dbReference type="HAMAP-Rule" id="MF_00587"/>
    </source>
</evidence>
<accession>Q083D7</accession>
<gene>
    <name type="ordered locus">Sfri_1778</name>
</gene>
<feature type="chain" id="PRO_1000129786" description="Putative pseudouridine methyltransferase">
    <location>
        <begin position="1"/>
        <end position="198"/>
    </location>
</feature>
<feature type="binding site" evidence="1">
    <location>
        <position position="132"/>
    </location>
    <ligand>
        <name>S-adenosyl-L-methionine</name>
        <dbReference type="ChEBI" id="CHEBI:59789"/>
    </ligand>
</feature>
<feature type="binding site" evidence="1">
    <location>
        <position position="186"/>
    </location>
    <ligand>
        <name>S-adenosyl-L-methionine</name>
        <dbReference type="ChEBI" id="CHEBI:59789"/>
    </ligand>
</feature>
<reference key="1">
    <citation type="submission" date="2006-08" db="EMBL/GenBank/DDBJ databases">
        <title>Complete sequence of Shewanella frigidimarina NCIMB 400.</title>
        <authorList>
            <consortium name="US DOE Joint Genome Institute"/>
            <person name="Copeland A."/>
            <person name="Lucas S."/>
            <person name="Lapidus A."/>
            <person name="Barry K."/>
            <person name="Detter J.C."/>
            <person name="Glavina del Rio T."/>
            <person name="Hammon N."/>
            <person name="Israni S."/>
            <person name="Dalin E."/>
            <person name="Tice H."/>
            <person name="Pitluck S."/>
            <person name="Fredrickson J.K."/>
            <person name="Kolker E."/>
            <person name="McCuel L.A."/>
            <person name="DiChristina T."/>
            <person name="Nealson K.H."/>
            <person name="Newman D."/>
            <person name="Tiedje J.M."/>
            <person name="Zhou J."/>
            <person name="Romine M.F."/>
            <person name="Culley D.E."/>
            <person name="Serres M."/>
            <person name="Chertkov O."/>
            <person name="Brettin T."/>
            <person name="Bruce D."/>
            <person name="Han C."/>
            <person name="Tapia R."/>
            <person name="Gilna P."/>
            <person name="Schmutz J."/>
            <person name="Larimer F."/>
            <person name="Land M."/>
            <person name="Hauser L."/>
            <person name="Kyrpides N."/>
            <person name="Mikhailova N."/>
            <person name="Richardson P."/>
        </authorList>
    </citation>
    <scope>NUCLEOTIDE SEQUENCE [LARGE SCALE GENOMIC DNA]</scope>
    <source>
        <strain>NCIMB 400</strain>
    </source>
</reference>
<name>TRMYL_SHEFN</name>
<sequence>MRAFVVRARAAPVDSQQFLAAIGHEAHTEILAHTLMNTIFVAQSHRDDVVVYLVLESTQDFSRTICFRSNELGHIGGFHEQNLTNKIAKALTVSKGMAKEQLREVEAGITVRTVSFEKLIQELAEDYQLYMLEKKGTPVRDIEFAANPCFLLTDHIPMPKKSFNSLKRLGTQHINLGPKMLFASQCVVLIHNELDMRL</sequence>
<keyword id="KW-0963">Cytoplasm</keyword>
<keyword id="KW-0489">Methyltransferase</keyword>
<keyword id="KW-1185">Reference proteome</keyword>
<keyword id="KW-0949">S-adenosyl-L-methionine</keyword>
<keyword id="KW-0808">Transferase</keyword>